<sequence length="665" mass="74827">MSTNKSSIEKITLGSFLIALGVVYGDIGTSPLYVMKSIINGNGGLESITPDFILGVLSLIFWTMTLLTTIKYVLITLKADNKGEGGIFSLYTLVRRRAKWLIIPAMVGGSALLADGMLTPAVTVTSSIEGLKILPSFNDIFGNNQDIIIIIVLVILSFLFFIQHFGTEIIGKIFGPVMFIWFAFLAILGIVNLSGNLYLLKALSPHYAIKILFSPNNHLGFFILGGVFLSTTGAEALYSDLGHVGRKNIYLTWPLVKICLLLNYFGQAAWILSQKNNTKLYGIESLNPFFQMMPSWLLLFGVLISTLAAIIASQALISGSYTLVSEAIKLNLFPRLQCLYPSNSKGQIYMPAINRILWIACIAIVLYFRSSDNMEAAYGLSITVTMLMTSILLFNYLLKIKTPLPIALIILVFFGSLEFSFLISSAVKFEKGGFVSVLIALCILSIMYIWIKGHYIKMSLLDYIPIENYKNQLKELKNDVDRPKYATNLVYLTSSEKSKRIERKIMYSILDKRPKRADVYWFVNVIVTDEPYTAEYTVNTFGTDYMVKVQLKLGFRVNQKLNVFLRQIVCELINNGDIKVQNRKYTTLPNRNVGDFRFILINECLSSESKLKSWNSMIIKAKLFIKKFTVSPAKWFGLESSEIEIENVPLILGSTEHTTLKRVYK</sequence>
<evidence type="ECO:0000255" key="1">
    <source>
        <dbReference type="HAMAP-Rule" id="MF_01522"/>
    </source>
</evidence>
<protein>
    <recommendedName>
        <fullName evidence="1">Probable potassium transport system protein Kup</fullName>
    </recommendedName>
</protein>
<dbReference type="EMBL" id="CP000246">
    <property type="protein sequence ID" value="ABG82810.1"/>
    <property type="molecule type" value="Genomic_DNA"/>
</dbReference>
<dbReference type="RefSeq" id="WP_011590620.1">
    <property type="nucleotide sequence ID" value="NC_008261.1"/>
</dbReference>
<dbReference type="PaxDb" id="195103-CPF_1235"/>
<dbReference type="GeneID" id="93002490"/>
<dbReference type="KEGG" id="cpf:CPF_1235"/>
<dbReference type="eggNOG" id="COG3158">
    <property type="taxonomic scope" value="Bacteria"/>
</dbReference>
<dbReference type="HOGENOM" id="CLU_008142_4_1_9"/>
<dbReference type="Proteomes" id="UP000001823">
    <property type="component" value="Chromosome"/>
</dbReference>
<dbReference type="GO" id="GO:0005886">
    <property type="term" value="C:plasma membrane"/>
    <property type="evidence" value="ECO:0007669"/>
    <property type="project" value="UniProtKB-SubCell"/>
</dbReference>
<dbReference type="GO" id="GO:0015079">
    <property type="term" value="F:potassium ion transmembrane transporter activity"/>
    <property type="evidence" value="ECO:0007669"/>
    <property type="project" value="UniProtKB-UniRule"/>
</dbReference>
<dbReference type="GO" id="GO:0015293">
    <property type="term" value="F:symporter activity"/>
    <property type="evidence" value="ECO:0007669"/>
    <property type="project" value="UniProtKB-UniRule"/>
</dbReference>
<dbReference type="HAMAP" id="MF_01522">
    <property type="entry name" value="Kup"/>
    <property type="match status" value="1"/>
</dbReference>
<dbReference type="InterPro" id="IPR003855">
    <property type="entry name" value="K+_transporter"/>
</dbReference>
<dbReference type="InterPro" id="IPR053952">
    <property type="entry name" value="K_trans_C"/>
</dbReference>
<dbReference type="InterPro" id="IPR053951">
    <property type="entry name" value="K_trans_N"/>
</dbReference>
<dbReference type="InterPro" id="IPR023051">
    <property type="entry name" value="Kup"/>
</dbReference>
<dbReference type="PANTHER" id="PTHR30540:SF83">
    <property type="entry name" value="K+ POTASSIUM TRANSPORTER"/>
    <property type="match status" value="1"/>
</dbReference>
<dbReference type="PANTHER" id="PTHR30540">
    <property type="entry name" value="OSMOTIC STRESS POTASSIUM TRANSPORTER"/>
    <property type="match status" value="1"/>
</dbReference>
<dbReference type="Pfam" id="PF02705">
    <property type="entry name" value="K_trans"/>
    <property type="match status" value="1"/>
</dbReference>
<dbReference type="Pfam" id="PF22776">
    <property type="entry name" value="K_trans_C"/>
    <property type="match status" value="1"/>
</dbReference>
<organism>
    <name type="scientific">Clostridium perfringens (strain ATCC 13124 / DSM 756 / JCM 1290 / NCIMB 6125 / NCTC 8237 / Type A)</name>
    <dbReference type="NCBI Taxonomy" id="195103"/>
    <lineage>
        <taxon>Bacteria</taxon>
        <taxon>Bacillati</taxon>
        <taxon>Bacillota</taxon>
        <taxon>Clostridia</taxon>
        <taxon>Eubacteriales</taxon>
        <taxon>Clostridiaceae</taxon>
        <taxon>Clostridium</taxon>
    </lineage>
</organism>
<keyword id="KW-1003">Cell membrane</keyword>
<keyword id="KW-0406">Ion transport</keyword>
<keyword id="KW-0472">Membrane</keyword>
<keyword id="KW-0630">Potassium</keyword>
<keyword id="KW-0633">Potassium transport</keyword>
<keyword id="KW-0769">Symport</keyword>
<keyword id="KW-0812">Transmembrane</keyword>
<keyword id="KW-1133">Transmembrane helix</keyword>
<keyword id="KW-0813">Transport</keyword>
<comment type="function">
    <text evidence="1">Transport of potassium into the cell. Likely operates as a K(+):H(+) symporter.</text>
</comment>
<comment type="catalytic activity">
    <reaction evidence="1">
        <text>K(+)(in) + H(+)(in) = K(+)(out) + H(+)(out)</text>
        <dbReference type="Rhea" id="RHEA:28490"/>
        <dbReference type="ChEBI" id="CHEBI:15378"/>
        <dbReference type="ChEBI" id="CHEBI:29103"/>
    </reaction>
    <physiologicalReaction direction="right-to-left" evidence="1">
        <dbReference type="Rhea" id="RHEA:28492"/>
    </physiologicalReaction>
</comment>
<comment type="subcellular location">
    <subcellularLocation>
        <location evidence="1">Cell membrane</location>
        <topology evidence="1">Multi-pass membrane protein</topology>
    </subcellularLocation>
</comment>
<comment type="similarity">
    <text evidence="1">Belongs to the HAK/KUP transporter (TC 2.A.72) family.</text>
</comment>
<accession>Q0TRQ9</accession>
<gene>
    <name evidence="1" type="primary">kup</name>
    <name type="ordered locus">CPF_1235</name>
</gene>
<feature type="chain" id="PRO_0000279778" description="Probable potassium transport system protein Kup">
    <location>
        <begin position="1"/>
        <end position="665"/>
    </location>
</feature>
<feature type="transmembrane region" description="Helical" evidence="1">
    <location>
        <begin position="15"/>
        <end position="35"/>
    </location>
</feature>
<feature type="transmembrane region" description="Helical" evidence="1">
    <location>
        <begin position="48"/>
        <end position="68"/>
    </location>
</feature>
<feature type="transmembrane region" description="Helical" evidence="1">
    <location>
        <begin position="100"/>
        <end position="120"/>
    </location>
</feature>
<feature type="transmembrane region" description="Helical" evidence="1">
    <location>
        <begin position="147"/>
        <end position="167"/>
    </location>
</feature>
<feature type="transmembrane region" description="Helical" evidence="1">
    <location>
        <begin position="173"/>
        <end position="193"/>
    </location>
</feature>
<feature type="transmembrane region" description="Helical" evidence="1">
    <location>
        <begin position="219"/>
        <end position="239"/>
    </location>
</feature>
<feature type="transmembrane region" description="Helical" evidence="1">
    <location>
        <begin position="251"/>
        <end position="271"/>
    </location>
</feature>
<feature type="transmembrane region" description="Helical" evidence="1">
    <location>
        <begin position="292"/>
        <end position="312"/>
    </location>
</feature>
<feature type="transmembrane region" description="Helical" evidence="1">
    <location>
        <begin position="348"/>
        <end position="368"/>
    </location>
</feature>
<feature type="transmembrane region" description="Helical" evidence="1">
    <location>
        <begin position="378"/>
        <end position="398"/>
    </location>
</feature>
<feature type="transmembrane region" description="Helical" evidence="1">
    <location>
        <begin position="403"/>
        <end position="423"/>
    </location>
</feature>
<feature type="transmembrane region" description="Helical" evidence="1">
    <location>
        <begin position="431"/>
        <end position="451"/>
    </location>
</feature>
<reference key="1">
    <citation type="journal article" date="2006" name="Genome Res.">
        <title>Skewed genomic variability in strains of the toxigenic bacterial pathogen, Clostridium perfringens.</title>
        <authorList>
            <person name="Myers G.S.A."/>
            <person name="Rasko D.A."/>
            <person name="Cheung J.K."/>
            <person name="Ravel J."/>
            <person name="Seshadri R."/>
            <person name="DeBoy R.T."/>
            <person name="Ren Q."/>
            <person name="Varga J."/>
            <person name="Awad M.M."/>
            <person name="Brinkac L.M."/>
            <person name="Daugherty S.C."/>
            <person name="Haft D.H."/>
            <person name="Dodson R.J."/>
            <person name="Madupu R."/>
            <person name="Nelson W.C."/>
            <person name="Rosovitz M.J."/>
            <person name="Sullivan S.A."/>
            <person name="Khouri H."/>
            <person name="Dimitrov G.I."/>
            <person name="Watkins K.L."/>
            <person name="Mulligan S."/>
            <person name="Benton J."/>
            <person name="Radune D."/>
            <person name="Fisher D.J."/>
            <person name="Atkins H.S."/>
            <person name="Hiscox T."/>
            <person name="Jost B.H."/>
            <person name="Billington S.J."/>
            <person name="Songer J.G."/>
            <person name="McClane B.A."/>
            <person name="Titball R.W."/>
            <person name="Rood J.I."/>
            <person name="Melville S.B."/>
            <person name="Paulsen I.T."/>
        </authorList>
    </citation>
    <scope>NUCLEOTIDE SEQUENCE [LARGE SCALE GENOMIC DNA]</scope>
    <source>
        <strain>ATCC 13124 / DSM 756 / JCM 1290 / NCIMB 6125 / NCTC 8237 / S 107 / Type A</strain>
    </source>
</reference>
<proteinExistence type="inferred from homology"/>
<name>KUP_CLOP1</name>